<proteinExistence type="evidence at protein level"/>
<feature type="signal peptide" evidence="1">
    <location>
        <begin position="1"/>
        <end position="17"/>
    </location>
</feature>
<feature type="chain" id="PRO_0000399447" description="Uncharacterized protein 1" evidence="1">
    <location>
        <begin position="18"/>
        <end position="244"/>
    </location>
</feature>
<organism>
    <name type="scientific">Haliotis asinina</name>
    <name type="common">Donkey's ear abalone</name>
    <name type="synonym">Ass's ear abalone</name>
    <dbReference type="NCBI Taxonomy" id="109174"/>
    <lineage>
        <taxon>Eukaryota</taxon>
        <taxon>Metazoa</taxon>
        <taxon>Spiralia</taxon>
        <taxon>Lophotrochozoa</taxon>
        <taxon>Mollusca</taxon>
        <taxon>Gastropoda</taxon>
        <taxon>Vetigastropoda</taxon>
        <taxon>Lepetellida</taxon>
        <taxon>Haliotoidea</taxon>
        <taxon>Haliotidae</taxon>
        <taxon>Haliotis</taxon>
    </lineage>
</organism>
<dbReference type="EMBL" id="DW986289">
    <property type="status" value="NOT_ANNOTATED_CDS"/>
    <property type="molecule type" value="mRNA"/>
</dbReference>
<dbReference type="RefSeq" id="XP_067650212.1">
    <property type="nucleotide sequence ID" value="XM_067794111.1"/>
</dbReference>
<dbReference type="RefSeq" id="XP_067650213.1">
    <property type="nucleotide sequence ID" value="XM_067794112.1"/>
</dbReference>
<dbReference type="GeneID" id="137256335"/>
<dbReference type="GO" id="GO:0005576">
    <property type="term" value="C:extracellular region"/>
    <property type="evidence" value="ECO:0000314"/>
    <property type="project" value="UniProtKB"/>
</dbReference>
<name>UP1_HALAI</name>
<keyword id="KW-0903">Direct protein sequencing</keyword>
<keyword id="KW-0964">Secreted</keyword>
<keyword id="KW-0732">Signal</keyword>
<sequence>MVLHVITALLSIGLCYGMPPSGTTAAPTAYNGAAAQESLIPQQAHHARASLFPQQQRNPSYQTMGSYGSSLFDPSVFPVAHAPASQAGGLLGRAVARTSGGQANAGASSQNLMRSIMQNTMTGRLMGLDNQEIAHLNSVRTLGVGHATIHRLMKIDQIPSYNYYLALKNKPAQFSKAQNYLMTLNRMENHATDSQLEAMGARMLMQRNMDPDLARMVQLDAARGVYGDRLQRVLLGGSQMSLLG</sequence>
<evidence type="ECO:0000255" key="1"/>
<evidence type="ECO:0000269" key="2">
    <source>
    </source>
</evidence>
<evidence type="ECO:0000269" key="3">
    <source>
    </source>
</evidence>
<evidence type="ECO:0000305" key="4"/>
<reference evidence="4" key="1">
    <citation type="journal article" date="2006" name="BMC Biol.">
        <title>A rapidly evolving secretome builds and patterns a sea shell.</title>
        <authorList>
            <person name="Jackson D.J."/>
            <person name="McDougall C."/>
            <person name="Green K."/>
            <person name="Simpson F."/>
            <person name="Woerheide G."/>
            <person name="Degnan B.M."/>
        </authorList>
    </citation>
    <scope>NUCLEOTIDE SEQUENCE [MRNA]</scope>
    <source>
        <tissue evidence="2">Mantle</tissue>
    </source>
</reference>
<reference evidence="4" key="2">
    <citation type="journal article" date="2010" name="Proteome Sci.">
        <title>Proteomic analysis of the organic matrix of the abalone Haliotis asinina calcified shell.</title>
        <authorList>
            <person name="Marie B."/>
            <person name="Marie A."/>
            <person name="Jackson D.J."/>
            <person name="Dubost L."/>
            <person name="Degnan B.M."/>
            <person name="Milet C."/>
            <person name="Marin F."/>
        </authorList>
    </citation>
    <scope>PROTEIN SEQUENCE OF 49-57; 115-151; 159-168; 177-202 AND 208-223</scope>
    <scope>SUBCELLULAR LOCATION</scope>
    <scope>TISSUE SPECIFICITY</scope>
    <source>
        <tissue evidence="3">Shell</tissue>
    </source>
</reference>
<comment type="subcellular location">
    <subcellularLocation>
        <location evidence="3">Secreted</location>
    </subcellularLocation>
</comment>
<comment type="tissue specificity">
    <text evidence="3">Component of the acid-soluble and acid-insoluble organic matrix of prismatic shell layers (at protein level).</text>
</comment>
<accession>P86731</accession>
<protein>
    <recommendedName>
        <fullName>Uncharacterized protein 1</fullName>
    </recommendedName>
</protein>